<reference key="1">
    <citation type="submission" date="2006-03" db="EMBL/GenBank/DDBJ databases">
        <title>Complete sequence of Methylobacillus flagellatus KT.</title>
        <authorList>
            <consortium name="US DOE Joint Genome Institute"/>
            <person name="Copeland A."/>
            <person name="Lucas S."/>
            <person name="Lapidus A."/>
            <person name="Barry K."/>
            <person name="Detter J.C."/>
            <person name="Glavina del Rio T."/>
            <person name="Hammon N."/>
            <person name="Israni S."/>
            <person name="Dalin E."/>
            <person name="Tice H."/>
            <person name="Pitluck S."/>
            <person name="Brettin T."/>
            <person name="Bruce D."/>
            <person name="Han C."/>
            <person name="Tapia R."/>
            <person name="Saunders E."/>
            <person name="Gilna P."/>
            <person name="Schmutz J."/>
            <person name="Larimer F."/>
            <person name="Land M."/>
            <person name="Kyrpides N."/>
            <person name="Anderson I."/>
            <person name="Richardson P."/>
        </authorList>
    </citation>
    <scope>NUCLEOTIDE SEQUENCE [LARGE SCALE GENOMIC DNA]</scope>
    <source>
        <strain>ATCC 51484 / DSM 6875 / VKM B-1610 / KT</strain>
    </source>
</reference>
<dbReference type="EC" id="2.1.3.3" evidence="2"/>
<dbReference type="EMBL" id="CP000284">
    <property type="protein sequence ID" value="ABE49977.1"/>
    <property type="molecule type" value="Genomic_DNA"/>
</dbReference>
<dbReference type="RefSeq" id="WP_011479931.1">
    <property type="nucleotide sequence ID" value="NC_007947.1"/>
</dbReference>
<dbReference type="SMR" id="Q1H0L0"/>
<dbReference type="STRING" id="265072.Mfla_1709"/>
<dbReference type="KEGG" id="mfa:Mfla_1709"/>
<dbReference type="eggNOG" id="COG0078">
    <property type="taxonomic scope" value="Bacteria"/>
</dbReference>
<dbReference type="HOGENOM" id="CLU_043846_3_2_4"/>
<dbReference type="OrthoDB" id="9802587at2"/>
<dbReference type="UniPathway" id="UPA00068">
    <property type="reaction ID" value="UER00112"/>
</dbReference>
<dbReference type="Proteomes" id="UP000002440">
    <property type="component" value="Chromosome"/>
</dbReference>
<dbReference type="GO" id="GO:0005737">
    <property type="term" value="C:cytoplasm"/>
    <property type="evidence" value="ECO:0007669"/>
    <property type="project" value="UniProtKB-SubCell"/>
</dbReference>
<dbReference type="GO" id="GO:0016597">
    <property type="term" value="F:amino acid binding"/>
    <property type="evidence" value="ECO:0007669"/>
    <property type="project" value="InterPro"/>
</dbReference>
<dbReference type="GO" id="GO:0004585">
    <property type="term" value="F:ornithine carbamoyltransferase activity"/>
    <property type="evidence" value="ECO:0007669"/>
    <property type="project" value="UniProtKB-UniRule"/>
</dbReference>
<dbReference type="GO" id="GO:0042450">
    <property type="term" value="P:arginine biosynthetic process via ornithine"/>
    <property type="evidence" value="ECO:0007669"/>
    <property type="project" value="TreeGrafter"/>
</dbReference>
<dbReference type="GO" id="GO:0019240">
    <property type="term" value="P:citrulline biosynthetic process"/>
    <property type="evidence" value="ECO:0007669"/>
    <property type="project" value="TreeGrafter"/>
</dbReference>
<dbReference type="GO" id="GO:0006526">
    <property type="term" value="P:L-arginine biosynthetic process"/>
    <property type="evidence" value="ECO:0007669"/>
    <property type="project" value="UniProtKB-UniRule"/>
</dbReference>
<dbReference type="FunFam" id="3.40.50.1370:FF:000008">
    <property type="entry name" value="Ornithine carbamoyltransferase"/>
    <property type="match status" value="1"/>
</dbReference>
<dbReference type="Gene3D" id="3.40.50.1370">
    <property type="entry name" value="Aspartate/ornithine carbamoyltransferase"/>
    <property type="match status" value="2"/>
</dbReference>
<dbReference type="HAMAP" id="MF_01109">
    <property type="entry name" value="OTCase"/>
    <property type="match status" value="1"/>
</dbReference>
<dbReference type="InterPro" id="IPR006132">
    <property type="entry name" value="Asp/Orn_carbamoyltranf_P-bd"/>
</dbReference>
<dbReference type="InterPro" id="IPR006130">
    <property type="entry name" value="Asp/Orn_carbamoylTrfase"/>
</dbReference>
<dbReference type="InterPro" id="IPR036901">
    <property type="entry name" value="Asp/Orn_carbamoylTrfase_sf"/>
</dbReference>
<dbReference type="InterPro" id="IPR006131">
    <property type="entry name" value="Asp_carbamoyltransf_Asp/Orn-bd"/>
</dbReference>
<dbReference type="InterPro" id="IPR002292">
    <property type="entry name" value="Orn/put_carbamltrans"/>
</dbReference>
<dbReference type="InterPro" id="IPR024904">
    <property type="entry name" value="OTCase_ArgI"/>
</dbReference>
<dbReference type="NCBIfam" id="TIGR00658">
    <property type="entry name" value="orni_carb_tr"/>
    <property type="match status" value="1"/>
</dbReference>
<dbReference type="NCBIfam" id="NF001986">
    <property type="entry name" value="PRK00779.1"/>
    <property type="match status" value="1"/>
</dbReference>
<dbReference type="PANTHER" id="PTHR45753">
    <property type="entry name" value="ORNITHINE CARBAMOYLTRANSFERASE, MITOCHONDRIAL"/>
    <property type="match status" value="1"/>
</dbReference>
<dbReference type="PANTHER" id="PTHR45753:SF3">
    <property type="entry name" value="ORNITHINE TRANSCARBAMYLASE, MITOCHONDRIAL"/>
    <property type="match status" value="1"/>
</dbReference>
<dbReference type="Pfam" id="PF00185">
    <property type="entry name" value="OTCace"/>
    <property type="match status" value="1"/>
</dbReference>
<dbReference type="Pfam" id="PF02729">
    <property type="entry name" value="OTCace_N"/>
    <property type="match status" value="1"/>
</dbReference>
<dbReference type="PRINTS" id="PR00100">
    <property type="entry name" value="AOTCASE"/>
</dbReference>
<dbReference type="PRINTS" id="PR00102">
    <property type="entry name" value="OTCASE"/>
</dbReference>
<dbReference type="SUPFAM" id="SSF53671">
    <property type="entry name" value="Aspartate/ornithine carbamoyltransferase"/>
    <property type="match status" value="1"/>
</dbReference>
<dbReference type="PROSITE" id="PS00097">
    <property type="entry name" value="CARBAMOYLTRANSFERASE"/>
    <property type="match status" value="1"/>
</dbReference>
<protein>
    <recommendedName>
        <fullName evidence="2">Ornithine carbamoyltransferase</fullName>
        <shortName evidence="2">OTCase</shortName>
        <ecNumber evidence="2">2.1.3.3</ecNumber>
    </recommendedName>
</protein>
<proteinExistence type="inferred from homology"/>
<sequence length="306" mass="35081">MALKHFLQFNDLNADELAHIFERTRWIKEQFKAYQQYWPLTDRTLVMIFEKASTRTRLSFEAGMQQLGGSAIYLNTRDSQLGRGEPVEDAAQVISRMSDIVMIRTFEQEIIERFAANSRVPVINGLTNEYHPCQILADIFTYIEHRGSIKGKTVAWIGDSNNVCNTWLQAAEVLDFNVHVSTPPGYEVEPERANLYGTDHYEEFTDPMEAARGADLVTTDVWTSMGFEAENEERRRDFHDWQVDADMMRVAGKDALFMHCLPAHRGEEVTADVIDGAQSVVWDEAENRLHVQKALMEYLLLGKVQV</sequence>
<keyword id="KW-0028">Amino-acid biosynthesis</keyword>
<keyword id="KW-0055">Arginine biosynthesis</keyword>
<keyword id="KW-0963">Cytoplasm</keyword>
<keyword id="KW-1185">Reference proteome</keyword>
<keyword id="KW-0808">Transferase</keyword>
<organism>
    <name type="scientific">Methylobacillus flagellatus (strain ATCC 51484 / DSM 6875 / VKM B-1610 / KT)</name>
    <dbReference type="NCBI Taxonomy" id="265072"/>
    <lineage>
        <taxon>Bacteria</taxon>
        <taxon>Pseudomonadati</taxon>
        <taxon>Pseudomonadota</taxon>
        <taxon>Betaproteobacteria</taxon>
        <taxon>Nitrosomonadales</taxon>
        <taxon>Methylophilaceae</taxon>
        <taxon>Methylobacillus</taxon>
    </lineage>
</organism>
<accession>Q1H0L0</accession>
<evidence type="ECO:0000250" key="1"/>
<evidence type="ECO:0000255" key="2">
    <source>
        <dbReference type="HAMAP-Rule" id="MF_01109"/>
    </source>
</evidence>
<name>OTC_METFK</name>
<comment type="function">
    <text evidence="1">Reversibly catalyzes the transfer of the carbamoyl group from carbamoyl phosphate (CP) to the N(epsilon) atom of ornithine (ORN) to produce L-citrulline.</text>
</comment>
<comment type="catalytic activity">
    <reaction evidence="2">
        <text>carbamoyl phosphate + L-ornithine = L-citrulline + phosphate + H(+)</text>
        <dbReference type="Rhea" id="RHEA:19513"/>
        <dbReference type="ChEBI" id="CHEBI:15378"/>
        <dbReference type="ChEBI" id="CHEBI:43474"/>
        <dbReference type="ChEBI" id="CHEBI:46911"/>
        <dbReference type="ChEBI" id="CHEBI:57743"/>
        <dbReference type="ChEBI" id="CHEBI:58228"/>
        <dbReference type="EC" id="2.1.3.3"/>
    </reaction>
</comment>
<comment type="pathway">
    <text evidence="2">Amino-acid biosynthesis; L-arginine biosynthesis; L-arginine from L-ornithine and carbamoyl phosphate: step 1/3.</text>
</comment>
<comment type="subcellular location">
    <subcellularLocation>
        <location evidence="2">Cytoplasm</location>
    </subcellularLocation>
</comment>
<comment type="similarity">
    <text evidence="2">Belongs to the aspartate/ornithine carbamoyltransferase superfamily. OTCase family.</text>
</comment>
<feature type="chain" id="PRO_1000137099" description="Ornithine carbamoyltransferase">
    <location>
        <begin position="1"/>
        <end position="306"/>
    </location>
</feature>
<feature type="binding site" evidence="2">
    <location>
        <begin position="53"/>
        <end position="56"/>
    </location>
    <ligand>
        <name>carbamoyl phosphate</name>
        <dbReference type="ChEBI" id="CHEBI:58228"/>
    </ligand>
</feature>
<feature type="binding site" evidence="2">
    <location>
        <position position="80"/>
    </location>
    <ligand>
        <name>carbamoyl phosphate</name>
        <dbReference type="ChEBI" id="CHEBI:58228"/>
    </ligand>
</feature>
<feature type="binding site" evidence="2">
    <location>
        <position position="104"/>
    </location>
    <ligand>
        <name>carbamoyl phosphate</name>
        <dbReference type="ChEBI" id="CHEBI:58228"/>
    </ligand>
</feature>
<feature type="binding site" evidence="2">
    <location>
        <begin position="131"/>
        <end position="134"/>
    </location>
    <ligand>
        <name>carbamoyl phosphate</name>
        <dbReference type="ChEBI" id="CHEBI:58228"/>
    </ligand>
</feature>
<feature type="binding site" evidence="2">
    <location>
        <position position="162"/>
    </location>
    <ligand>
        <name>L-ornithine</name>
        <dbReference type="ChEBI" id="CHEBI:46911"/>
    </ligand>
</feature>
<feature type="binding site" evidence="2">
    <location>
        <position position="220"/>
    </location>
    <ligand>
        <name>L-ornithine</name>
        <dbReference type="ChEBI" id="CHEBI:46911"/>
    </ligand>
</feature>
<feature type="binding site" evidence="2">
    <location>
        <begin position="224"/>
        <end position="225"/>
    </location>
    <ligand>
        <name>L-ornithine</name>
        <dbReference type="ChEBI" id="CHEBI:46911"/>
    </ligand>
</feature>
<feature type="binding site" evidence="2">
    <location>
        <begin position="260"/>
        <end position="261"/>
    </location>
    <ligand>
        <name>carbamoyl phosphate</name>
        <dbReference type="ChEBI" id="CHEBI:58228"/>
    </ligand>
</feature>
<feature type="binding site" evidence="2">
    <location>
        <position position="288"/>
    </location>
    <ligand>
        <name>carbamoyl phosphate</name>
        <dbReference type="ChEBI" id="CHEBI:58228"/>
    </ligand>
</feature>
<gene>
    <name evidence="2" type="primary">argF</name>
    <name type="ordered locus">Mfla_1709</name>
</gene>